<name>Y527_HAEIN</name>
<accession>P44746</accession>
<keyword id="KW-0004">4Fe-4S</keyword>
<keyword id="KW-0249">Electron transport</keyword>
<keyword id="KW-0408">Iron</keyword>
<keyword id="KW-0411">Iron-sulfur</keyword>
<keyword id="KW-0479">Metal-binding</keyword>
<keyword id="KW-1185">Reference proteome</keyword>
<keyword id="KW-0677">Repeat</keyword>
<keyword id="KW-0813">Transport</keyword>
<proteinExistence type="evidence at protein level"/>
<protein>
    <recommendedName>
        <fullName>Uncharacterized ferredoxin-like protein HI_0527</fullName>
    </recommendedName>
</protein>
<dbReference type="EMBL" id="L42023">
    <property type="protein sequence ID" value="AAC22184.1"/>
    <property type="molecule type" value="Genomic_DNA"/>
</dbReference>
<dbReference type="PIR" id="E64074">
    <property type="entry name" value="E64074"/>
</dbReference>
<dbReference type="RefSeq" id="NP_438685.1">
    <property type="nucleotide sequence ID" value="NC_000907.1"/>
</dbReference>
<dbReference type="SMR" id="P44746"/>
<dbReference type="STRING" id="71421.HI_0527"/>
<dbReference type="EnsemblBacteria" id="AAC22184">
    <property type="protein sequence ID" value="AAC22184"/>
    <property type="gene ID" value="HI_0527"/>
</dbReference>
<dbReference type="KEGG" id="hin:HI_0527"/>
<dbReference type="PATRIC" id="fig|71421.8.peg.546"/>
<dbReference type="eggNOG" id="COG1145">
    <property type="taxonomic scope" value="Bacteria"/>
</dbReference>
<dbReference type="HOGENOM" id="CLU_139698_11_0_6"/>
<dbReference type="OrthoDB" id="9803397at2"/>
<dbReference type="PhylomeDB" id="P44746"/>
<dbReference type="BioCyc" id="HINF71421:G1GJ1-540-MONOMER"/>
<dbReference type="Proteomes" id="UP000000579">
    <property type="component" value="Chromosome"/>
</dbReference>
<dbReference type="GO" id="GO:0005737">
    <property type="term" value="C:cytoplasm"/>
    <property type="evidence" value="ECO:0000318"/>
    <property type="project" value="GO_Central"/>
</dbReference>
<dbReference type="GO" id="GO:0051539">
    <property type="term" value="F:4 iron, 4 sulfur cluster binding"/>
    <property type="evidence" value="ECO:0007669"/>
    <property type="project" value="UniProtKB-KW"/>
</dbReference>
<dbReference type="GO" id="GO:0046872">
    <property type="term" value="F:metal ion binding"/>
    <property type="evidence" value="ECO:0007669"/>
    <property type="project" value="UniProtKB-KW"/>
</dbReference>
<dbReference type="FunFam" id="3.30.70.20:FF:000004">
    <property type="entry name" value="4Fe-4S ferredoxin"/>
    <property type="match status" value="1"/>
</dbReference>
<dbReference type="Gene3D" id="3.30.70.20">
    <property type="match status" value="1"/>
</dbReference>
<dbReference type="InterPro" id="IPR017896">
    <property type="entry name" value="4Fe4S_Fe-S-bd"/>
</dbReference>
<dbReference type="InterPro" id="IPR017900">
    <property type="entry name" value="4Fe4S_Fe_S_CS"/>
</dbReference>
<dbReference type="InterPro" id="IPR047927">
    <property type="entry name" value="YfhL-like"/>
</dbReference>
<dbReference type="NCBIfam" id="NF033683">
    <property type="entry name" value="di_4Fe-4S_YfhL"/>
    <property type="match status" value="1"/>
</dbReference>
<dbReference type="Pfam" id="PF00037">
    <property type="entry name" value="Fer4"/>
    <property type="match status" value="1"/>
</dbReference>
<dbReference type="SUPFAM" id="SSF54862">
    <property type="entry name" value="4Fe-4S ferredoxins"/>
    <property type="match status" value="1"/>
</dbReference>
<dbReference type="PROSITE" id="PS00198">
    <property type="entry name" value="4FE4S_FER_1"/>
    <property type="match status" value="1"/>
</dbReference>
<dbReference type="PROSITE" id="PS51379">
    <property type="entry name" value="4FE4S_FER_2"/>
    <property type="match status" value="2"/>
</dbReference>
<feature type="chain" id="PRO_0000159301" description="Uncharacterized ferredoxin-like protein HI_0527">
    <location>
        <begin position="1"/>
        <end position="86"/>
    </location>
</feature>
<feature type="domain" description="4Fe-4S ferredoxin-type 1" evidence="1">
    <location>
        <begin position="1"/>
        <end position="29"/>
    </location>
</feature>
<feature type="domain" description="4Fe-4S ferredoxin-type 2" evidence="1">
    <location>
        <begin position="31"/>
        <end position="65"/>
    </location>
</feature>
<feature type="binding site" evidence="1">
    <location>
        <position position="9"/>
    </location>
    <ligand>
        <name>[4Fe-4S] cluster</name>
        <dbReference type="ChEBI" id="CHEBI:49883"/>
        <label>1</label>
    </ligand>
</feature>
<feature type="binding site" evidence="1">
    <location>
        <position position="12"/>
    </location>
    <ligand>
        <name>[4Fe-4S] cluster</name>
        <dbReference type="ChEBI" id="CHEBI:49883"/>
        <label>1</label>
    </ligand>
</feature>
<feature type="binding site" evidence="1">
    <location>
        <position position="15"/>
    </location>
    <ligand>
        <name>[4Fe-4S] cluster</name>
        <dbReference type="ChEBI" id="CHEBI:49883"/>
        <label>1</label>
    </ligand>
</feature>
<feature type="binding site" evidence="1">
    <location>
        <position position="19"/>
    </location>
    <ligand>
        <name>[4Fe-4S] cluster</name>
        <dbReference type="ChEBI" id="CHEBI:49883"/>
        <label>2</label>
    </ligand>
</feature>
<feature type="binding site" evidence="1">
    <location>
        <position position="38"/>
    </location>
    <ligand>
        <name>[4Fe-4S] cluster</name>
        <dbReference type="ChEBI" id="CHEBI:49883"/>
        <label>2</label>
    </ligand>
</feature>
<feature type="binding site" evidence="1">
    <location>
        <position position="41"/>
    </location>
    <ligand>
        <name>[4Fe-4S] cluster</name>
        <dbReference type="ChEBI" id="CHEBI:49883"/>
        <label>2</label>
    </ligand>
</feature>
<feature type="binding site" evidence="1">
    <location>
        <position position="50"/>
    </location>
    <ligand>
        <name>[4Fe-4S] cluster</name>
        <dbReference type="ChEBI" id="CHEBI:49883"/>
        <label>2</label>
    </ligand>
</feature>
<feature type="binding site" evidence="1">
    <location>
        <position position="54"/>
    </location>
    <ligand>
        <name>[4Fe-4S] cluster</name>
        <dbReference type="ChEBI" id="CHEBI:49883"/>
        <label>1</label>
    </ligand>
</feature>
<evidence type="ECO:0000255" key="1">
    <source>
        <dbReference type="PROSITE-ProRule" id="PRU00711"/>
    </source>
</evidence>
<comment type="cofactor">
    <cofactor evidence="1">
        <name>[4Fe-4S] cluster</name>
        <dbReference type="ChEBI" id="CHEBI:49883"/>
    </cofactor>
    <text evidence="1">Binds 2 [4Fe-4S] cluster.</text>
</comment>
<organism>
    <name type="scientific">Haemophilus influenzae (strain ATCC 51907 / DSM 11121 / KW20 / Rd)</name>
    <dbReference type="NCBI Taxonomy" id="71421"/>
    <lineage>
        <taxon>Bacteria</taxon>
        <taxon>Pseudomonadati</taxon>
        <taxon>Pseudomonadota</taxon>
        <taxon>Gammaproteobacteria</taxon>
        <taxon>Pasteurellales</taxon>
        <taxon>Pasteurellaceae</taxon>
        <taxon>Haemophilus</taxon>
    </lineage>
</organism>
<gene>
    <name type="ordered locus">HI_0527</name>
</gene>
<sequence>MALLITSKCTNCDMCLPECPNEAISIGDEIYVIDPILCTECVGHYDTPTCQKVCPITNCIKPDPEHQETEEQLWERFVMIHHSDKL</sequence>
<reference key="1">
    <citation type="journal article" date="1995" name="Science">
        <title>Whole-genome random sequencing and assembly of Haemophilus influenzae Rd.</title>
        <authorList>
            <person name="Fleischmann R.D."/>
            <person name="Adams M.D."/>
            <person name="White O."/>
            <person name="Clayton R.A."/>
            <person name="Kirkness E.F."/>
            <person name="Kerlavage A.R."/>
            <person name="Bult C.J."/>
            <person name="Tomb J.-F."/>
            <person name="Dougherty B.A."/>
            <person name="Merrick J.M."/>
            <person name="McKenney K."/>
            <person name="Sutton G.G."/>
            <person name="FitzHugh W."/>
            <person name="Fields C.A."/>
            <person name="Gocayne J.D."/>
            <person name="Scott J.D."/>
            <person name="Shirley R."/>
            <person name="Liu L.-I."/>
            <person name="Glodek A."/>
            <person name="Kelley J.M."/>
            <person name="Weidman J.F."/>
            <person name="Phillips C.A."/>
            <person name="Spriggs T."/>
            <person name="Hedblom E."/>
            <person name="Cotton M.D."/>
            <person name="Utterback T.R."/>
            <person name="Hanna M.C."/>
            <person name="Nguyen D.T."/>
            <person name="Saudek D.M."/>
            <person name="Brandon R.C."/>
            <person name="Fine L.D."/>
            <person name="Fritchman J.L."/>
            <person name="Fuhrmann J.L."/>
            <person name="Geoghagen N.S.M."/>
            <person name="Gnehm C.L."/>
            <person name="McDonald L.A."/>
            <person name="Small K.V."/>
            <person name="Fraser C.M."/>
            <person name="Smith H.O."/>
            <person name="Venter J.C."/>
        </authorList>
    </citation>
    <scope>NUCLEOTIDE SEQUENCE [LARGE SCALE GENOMIC DNA]</scope>
    <source>
        <strain>ATCC 51907 / DSM 11121 / KW20 / Rd</strain>
    </source>
</reference>
<reference key="2">
    <citation type="journal article" date="2000" name="Electrophoresis">
        <title>Two-dimensional map of the proteome of Haemophilus influenzae.</title>
        <authorList>
            <person name="Langen H."/>
            <person name="Takacs B."/>
            <person name="Evers S."/>
            <person name="Berndt P."/>
            <person name="Lahm H.W."/>
            <person name="Wipf B."/>
            <person name="Gray C."/>
            <person name="Fountoulakis M."/>
        </authorList>
    </citation>
    <scope>IDENTIFICATION BY MASS SPECTROMETRY</scope>
    <source>
        <strain>ATCC 51907 / DSM 11121 / KW20 / Rd</strain>
    </source>
</reference>